<dbReference type="EMBL" id="M72474">
    <property type="protein sequence ID" value="AAA48308.1"/>
    <property type="molecule type" value="Genomic_DNA"/>
</dbReference>
<dbReference type="EMBL" id="D11079">
    <property type="protein sequence ID" value="BAA01815.1"/>
    <property type="molecule type" value="Genomic_DNA"/>
</dbReference>
<dbReference type="EMBL" id="AY243312">
    <property type="protein sequence ID" value="AAO89446.1"/>
    <property type="molecule type" value="Genomic_DNA"/>
</dbReference>
<dbReference type="PIR" id="B40897">
    <property type="entry name" value="FAVZVR"/>
</dbReference>
<dbReference type="RefSeq" id="YP_233049.1">
    <property type="nucleotide sequence ID" value="NC_006998.1"/>
</dbReference>
<dbReference type="SMR" id="Q76ZN5"/>
<dbReference type="IntAct" id="Q76ZN5">
    <property type="interactions" value="1"/>
</dbReference>
<dbReference type="MINT" id="Q76ZN5"/>
<dbReference type="DNASU" id="3707697"/>
<dbReference type="GeneID" id="3707697"/>
<dbReference type="KEGG" id="vg:3707697"/>
<dbReference type="Proteomes" id="UP000000344">
    <property type="component" value="Genome"/>
</dbReference>
<dbReference type="GO" id="GO:0043657">
    <property type="term" value="C:host cell"/>
    <property type="evidence" value="ECO:0007669"/>
    <property type="project" value="GOC"/>
</dbReference>
<dbReference type="GO" id="GO:0030430">
    <property type="term" value="C:host cell cytoplasm"/>
    <property type="evidence" value="ECO:0007669"/>
    <property type="project" value="UniProtKB-SubCell"/>
</dbReference>
<dbReference type="GO" id="GO:0003779">
    <property type="term" value="F:actin binding"/>
    <property type="evidence" value="ECO:0007669"/>
    <property type="project" value="UniProtKB-KW"/>
</dbReference>
<dbReference type="GO" id="GO:0039680">
    <property type="term" value="P:actin-dependent intracellular transport of virus towards nucleus"/>
    <property type="evidence" value="ECO:0007669"/>
    <property type="project" value="UniProtKB-KW"/>
</dbReference>
<dbReference type="GO" id="GO:0046718">
    <property type="term" value="P:symbiont entry into host cell"/>
    <property type="evidence" value="ECO:0007669"/>
    <property type="project" value="UniProtKB-KW"/>
</dbReference>
<dbReference type="Gene3D" id="3.30.450.30">
    <property type="entry name" value="Dynein light chain 2a, cytoplasmic"/>
    <property type="match status" value="1"/>
</dbReference>
<dbReference type="InterPro" id="IPR048278">
    <property type="entry name" value="PFN"/>
</dbReference>
<dbReference type="InterPro" id="IPR005455">
    <property type="entry name" value="PFN_euk"/>
</dbReference>
<dbReference type="InterPro" id="IPR036140">
    <property type="entry name" value="PFN_sf"/>
</dbReference>
<dbReference type="InterPro" id="IPR027310">
    <property type="entry name" value="Profilin_CS"/>
</dbReference>
<dbReference type="Pfam" id="PF00235">
    <property type="entry name" value="Profilin"/>
    <property type="match status" value="1"/>
</dbReference>
<dbReference type="SMART" id="SM00392">
    <property type="entry name" value="PROF"/>
    <property type="match status" value="1"/>
</dbReference>
<dbReference type="SUPFAM" id="SSF55770">
    <property type="entry name" value="Profilin (actin-binding protein)"/>
    <property type="match status" value="1"/>
</dbReference>
<dbReference type="PROSITE" id="PS00414">
    <property type="entry name" value="PROFILIN"/>
    <property type="match status" value="1"/>
</dbReference>
<comment type="function">
    <text evidence="1 2">Participates in either intracellular transport of viral proteins or intercellular spread of the virus. Cellular profilins modulate actin filament dynamics (polymerization and depolymerization) via direct binding to actin through an actin-binding domain as well as by modulation of other actin-binding proteins (By similarity). In contrast to cellular homologs, the poxvirus profilins seem to bind actin only weakly.</text>
</comment>
<comment type="subunit">
    <text evidence="1">Interacts with host TPM1. Interacts with protein A25 (By similarity).</text>
</comment>
<comment type="subcellular location">
    <subcellularLocation>
        <location>Host cytoplasm</location>
    </subcellularLocation>
</comment>
<comment type="similarity">
    <text evidence="3">Belongs to the profilin family.</text>
</comment>
<accession>Q76ZN5</accession>
<accession>P20844</accession>
<evidence type="ECO:0000250" key="1"/>
<evidence type="ECO:0000269" key="2">
    <source>
    </source>
</evidence>
<evidence type="ECO:0000305" key="3"/>
<feature type="chain" id="PRO_0000199683" description="Profilin">
    <location>
        <begin position="1"/>
        <end position="133"/>
    </location>
</feature>
<reference key="1">
    <citation type="journal article" date="1991" name="J. Virol.">
        <title>Sequence analysis, expression, and deletion of a vaccinia virus gene encoding a homolog of profilin, a eukaryotic actin-binding protein.</title>
        <authorList>
            <person name="Blasco R."/>
            <person name="Cole N.B."/>
            <person name="Moss B."/>
        </authorList>
    </citation>
    <scope>NUCLEOTIDE SEQUENCE [GENOMIC DNA]</scope>
</reference>
<reference key="2">
    <citation type="journal article" date="1991" name="J. Gen. Virol.">
        <title>Nucleotide sequence of 42 kbp of vaccinia virus strain WR from near the right inverted terminal repeat.</title>
        <authorList>
            <person name="Smith G.L."/>
            <person name="Chan Y.S."/>
            <person name="Howard S.T."/>
        </authorList>
    </citation>
    <scope>NUCLEOTIDE SEQUENCE [GENOMIC DNA]</scope>
</reference>
<reference key="3">
    <citation type="submission" date="2003-02" db="EMBL/GenBank/DDBJ databases">
        <title>Sequencing of the coding region of Vaccinia-WR to an average 9-fold redundancy and an error rate of 0.16/10kb.</title>
        <authorList>
            <person name="Esposito J.J."/>
            <person name="Frace A.M."/>
            <person name="Sammons S.A."/>
            <person name="Olsen-Rasmussen M."/>
            <person name="Osborne J."/>
            <person name="Wohlhueter R."/>
        </authorList>
    </citation>
    <scope>NUCLEOTIDE SEQUENCE [LARGE SCALE GENOMIC DNA]</scope>
</reference>
<reference key="4">
    <citation type="journal article" date="1994" name="Biochemistry">
        <title>Vaccinia virus expresses a novel profilin with a higher affinity for polyphosphoinositides than actin.</title>
        <authorList>
            <person name="Machesky L.M."/>
            <person name="Cole N.B."/>
            <person name="Moss B."/>
            <person name="Pollard T.D."/>
        </authorList>
    </citation>
    <scope>FUNCTION</scope>
</reference>
<reference key="5">
    <citation type="journal article" date="2006" name="Virol. J.">
        <title>Pox proteomics: mass spectrometry analysis and identification of Vaccinia virion proteins.</title>
        <authorList>
            <person name="Yoder J.D."/>
            <person name="Chen T.S."/>
            <person name="Gagnier C.R."/>
            <person name="Vemulapalli S."/>
            <person name="Maier C.S."/>
            <person name="Hruby D.E."/>
        </authorList>
    </citation>
    <scope>IDENTIFICATION BY MASS SPECTROMETRY</scope>
</reference>
<proteinExistence type="evidence at protein level"/>
<sequence length="133" mass="15052">MAEWHKIIEDISKNNKFEDAAIVDYKTTKNVLAAIPNRTFAKINPGEIIPLITNRNILKPLIGQKYCIVYTNSLMDENTYAMELLTGYAPVSPIVIARTHTALIFLMGKPTTSRRDVYRTCRDHATRVRATGN</sequence>
<organism>
    <name type="scientific">Vaccinia virus (strain Western Reserve)</name>
    <name type="common">VACV</name>
    <name type="synonym">Vaccinia virus (strain WR)</name>
    <dbReference type="NCBI Taxonomy" id="10254"/>
    <lineage>
        <taxon>Viruses</taxon>
        <taxon>Varidnaviria</taxon>
        <taxon>Bamfordvirae</taxon>
        <taxon>Nucleocytoviricota</taxon>
        <taxon>Pokkesviricetes</taxon>
        <taxon>Chitovirales</taxon>
        <taxon>Poxviridae</taxon>
        <taxon>Chordopoxvirinae</taxon>
        <taxon>Orthopoxvirus</taxon>
        <taxon>Vaccinia virus</taxon>
    </lineage>
</organism>
<name>PROF_VACCW</name>
<organismHost>
    <name type="scientific">Bos taurus</name>
    <name type="common">Bovine</name>
    <dbReference type="NCBI Taxonomy" id="9913"/>
</organismHost>
<gene>
    <name type="primary">OPG171</name>
    <name type="ordered locus">VACWR167</name>
    <name type="ORF">A42R</name>
</gene>
<protein>
    <recommendedName>
        <fullName>Profilin</fullName>
    </recommendedName>
</protein>
<keyword id="KW-0009">Actin-binding</keyword>
<keyword id="KW-1178">Actin-dependent inwards viral transport</keyword>
<keyword id="KW-1176">Cytoplasmic inwards viral transport</keyword>
<keyword id="KW-1035">Host cytoplasm</keyword>
<keyword id="KW-0945">Host-virus interaction</keyword>
<keyword id="KW-1185">Reference proteome</keyword>
<keyword id="KW-1160">Virus entry into host cell</keyword>